<sequence>MSCTIEKALADAKALVERLRDHDDAAESLIEQTTALNKRVEAMKQYQEEIQELNEVARHRPRSTLVMGIQQENRQIRELQQENKELRTSLEEHQSALELIMSKYREQMFRLLMASKKDDPGIIMKLKEQHSKIDMVHRNKSEGFFLDASRHILEAPQHGLERRHLEANQNELQAHVDQITEMAAVMRKAIEIDEQQGCKEQERIFQLEQENKGLREILQITRESFLNLRKDDASESTSLSALVTNSDLSLRKS</sequence>
<accession>Q9NVK5</accession>
<accession>Q6R955</accession>
<accession>Q8N5L7</accession>
<accession>Q9P034</accession>
<accession>Q9UFK8</accession>
<feature type="chain" id="PRO_0000299041" description="FGFR1 oncogene partner 2">
    <location>
        <begin position="1"/>
        <end position="253"/>
    </location>
</feature>
<feature type="region of interest" description="Disordered" evidence="3">
    <location>
        <begin position="231"/>
        <end position="253"/>
    </location>
</feature>
<feature type="coiled-coil region" evidence="2">
    <location>
        <begin position="5"/>
        <end position="104"/>
    </location>
</feature>
<feature type="coiled-coil region" evidence="2">
    <location>
        <begin position="160"/>
        <end position="223"/>
    </location>
</feature>
<feature type="compositionally biased region" description="Polar residues" evidence="3">
    <location>
        <begin position="235"/>
        <end position="253"/>
    </location>
</feature>
<feature type="site" description="Breakpoint for translocation to form FGFR1OP2-FGFR1">
    <location>
        <begin position="132"/>
        <end position="133"/>
    </location>
</feature>
<feature type="modified residue" description="Phosphoserine" evidence="9">
    <location>
        <position position="141"/>
    </location>
</feature>
<feature type="splice variant" id="VSP_027538" description="In isoform 2." evidence="4 6 7">
    <location>
        <begin position="133"/>
        <end position="170"/>
    </location>
</feature>
<feature type="splice variant" id="VSP_027539" description="In isoform 3." evidence="5">
    <original>EL</original>
    <variation>VH</variation>
    <location>
        <begin position="171"/>
        <end position="172"/>
    </location>
</feature>
<feature type="splice variant" id="VSP_027540" description="In isoform 3." evidence="5">
    <location>
        <begin position="173"/>
        <end position="253"/>
    </location>
</feature>
<feature type="sequence conflict" description="In Ref. 5; CAB56012." evidence="8" ref="5">
    <original>Q</original>
    <variation>W</variation>
    <location>
        <position position="47"/>
    </location>
</feature>
<feature type="sequence conflict" description="In Ref. 3; AAR91611." evidence="8" ref="3">
    <original>N</original>
    <variation>T</variation>
    <location>
        <position position="227"/>
    </location>
</feature>
<keyword id="KW-0025">Alternative splicing</keyword>
<keyword id="KW-0160">Chromosomal rearrangement</keyword>
<keyword id="KW-0175">Coiled coil</keyword>
<keyword id="KW-0963">Cytoplasm</keyword>
<keyword id="KW-0597">Phosphoprotein</keyword>
<keyword id="KW-1267">Proteomics identification</keyword>
<keyword id="KW-1185">Reference proteome</keyword>
<gene>
    <name type="primary">FGFR1OP2</name>
    <name type="ORF">HSPC123</name>
</gene>
<comment type="function">
    <text evidence="1">May be involved in wound healing pathway.</text>
</comment>
<comment type="interaction">
    <interactant intactId="EBI-1104764">
        <id>Q9NVK5</id>
    </interactant>
    <interactant intactId="EBI-2514791">
        <id>Q96CS2</id>
        <label>HAUS1</label>
    </interactant>
    <organismsDiffer>false</organismsDiffer>
    <experiments>3</experiments>
</comment>
<comment type="interaction">
    <interactant intactId="EBI-12377025">
        <id>Q9NVK5-3</id>
    </interactant>
    <interactant intactId="EBI-7353612">
        <id>P57075-2</id>
        <label>UBASH3A</label>
    </interactant>
    <organismsDiffer>false</organismsDiffer>
    <experiments>3</experiments>
</comment>
<comment type="interaction">
    <interactant intactId="EBI-12377025">
        <id>Q9NVK5-3</id>
    </interactant>
    <interactant intactId="EBI-14104088">
        <id>Q53FD0-2</id>
        <label>ZC2HC1C</label>
    </interactant>
    <organismsDiffer>false</organismsDiffer>
    <experiments>3</experiments>
</comment>
<comment type="subcellular location">
    <subcellularLocation>
        <location evidence="1">Cytoplasm</location>
    </subcellularLocation>
</comment>
<comment type="alternative products">
    <event type="alternative splicing"/>
    <isoform>
        <id>Q9NVK5-1</id>
        <name>1</name>
        <sequence type="displayed"/>
    </isoform>
    <isoform>
        <id>Q9NVK5-2</id>
        <name>2</name>
        <sequence type="described" ref="VSP_027538"/>
    </isoform>
    <isoform>
        <id>Q9NVK5-3</id>
        <name>3</name>
        <sequence type="described" ref="VSP_027539 VSP_027540"/>
    </isoform>
</comment>
<comment type="tissue specificity">
    <text>Expressed in bone marrow, spleen and thymus.</text>
</comment>
<comment type="disease">
    <text>A chromosomal aberration involving FGFR1OP2 may be a cause of stem cell myeloproliferative disorder (MPD). Insertion ins(12;8)(p11;p11p22) with FGFR1. MPD is characterized by myeloid hyperplasia, eosinophilia and T-cell or B-cell lymphoblastic lymphoma. In general it progresses to acute myeloid leukemia. The fusion protein FGFR1OP2-FGFR1 may exhibit constitutive kinase activity and be responsible for the transforming activity.</text>
</comment>
<comment type="similarity">
    <text evidence="8">Belongs to the SIKE family.</text>
</comment>
<comment type="sequence caution" evidence="8">
    <conflict type="frameshift">
        <sequence resource="EMBL-CDS" id="AAF29087"/>
    </conflict>
</comment>
<comment type="sequence caution" evidence="8">
    <conflict type="frameshift">
        <sequence resource="EMBL-CDS" id="CAB56012"/>
    </conflict>
</comment>
<organism>
    <name type="scientific">Homo sapiens</name>
    <name type="common">Human</name>
    <dbReference type="NCBI Taxonomy" id="9606"/>
    <lineage>
        <taxon>Eukaryota</taxon>
        <taxon>Metazoa</taxon>
        <taxon>Chordata</taxon>
        <taxon>Craniata</taxon>
        <taxon>Vertebrata</taxon>
        <taxon>Euteleostomi</taxon>
        <taxon>Mammalia</taxon>
        <taxon>Eutheria</taxon>
        <taxon>Euarchontoglires</taxon>
        <taxon>Primates</taxon>
        <taxon>Haplorrhini</taxon>
        <taxon>Catarrhini</taxon>
        <taxon>Hominidae</taxon>
        <taxon>Homo</taxon>
    </lineage>
</organism>
<dbReference type="EMBL" id="AF161472">
    <property type="protein sequence ID" value="AAF29087.1"/>
    <property type="status" value="ALT_FRAME"/>
    <property type="molecule type" value="mRNA"/>
</dbReference>
<dbReference type="EMBL" id="AK001534">
    <property type="protein sequence ID" value="BAA91745.1"/>
    <property type="molecule type" value="mRNA"/>
</dbReference>
<dbReference type="EMBL" id="AY506561">
    <property type="protein sequence ID" value="AAR91611.1"/>
    <property type="molecule type" value="mRNA"/>
</dbReference>
<dbReference type="EMBL" id="BC032143">
    <property type="protein sequence ID" value="AAH32143.1"/>
    <property type="molecule type" value="mRNA"/>
</dbReference>
<dbReference type="EMBL" id="AL117608">
    <property type="protein sequence ID" value="CAB56012.1"/>
    <property type="status" value="ALT_FRAME"/>
    <property type="molecule type" value="mRNA"/>
</dbReference>
<dbReference type="CCDS" id="CCDS53766.1">
    <molecule id="Q9NVK5-3"/>
</dbReference>
<dbReference type="CCDS" id="CCDS53767.1">
    <molecule id="Q9NVK5-2"/>
</dbReference>
<dbReference type="CCDS" id="CCDS8709.1">
    <molecule id="Q9NVK5-1"/>
</dbReference>
<dbReference type="PIR" id="T17322">
    <property type="entry name" value="T17322"/>
</dbReference>
<dbReference type="RefSeq" id="NP_001165358.1">
    <molecule id="Q9NVK5-2"/>
    <property type="nucleotide sequence ID" value="NM_001171887.2"/>
</dbReference>
<dbReference type="RefSeq" id="NP_001165359.1">
    <molecule id="Q9NVK5-3"/>
    <property type="nucleotide sequence ID" value="NM_001171888.2"/>
</dbReference>
<dbReference type="RefSeq" id="NP_056448.1">
    <molecule id="Q9NVK5-1"/>
    <property type="nucleotide sequence ID" value="NM_015633.3"/>
</dbReference>
<dbReference type="SMR" id="Q9NVK5"/>
<dbReference type="BioGRID" id="117566">
    <property type="interactions" value="98"/>
</dbReference>
<dbReference type="FunCoup" id="Q9NVK5">
    <property type="interactions" value="2024"/>
</dbReference>
<dbReference type="IntAct" id="Q9NVK5">
    <property type="interactions" value="92"/>
</dbReference>
<dbReference type="STRING" id="9606.ENSP00000229395"/>
<dbReference type="GlyGen" id="Q9NVK5">
    <property type="glycosylation" value="1 site, 1 O-linked glycan (1 site)"/>
</dbReference>
<dbReference type="iPTMnet" id="Q9NVK5"/>
<dbReference type="MetOSite" id="Q9NVK5"/>
<dbReference type="PhosphoSitePlus" id="Q9NVK5"/>
<dbReference type="BioMuta" id="FGFR1OP2"/>
<dbReference type="DMDM" id="74734519"/>
<dbReference type="jPOST" id="Q9NVK5"/>
<dbReference type="MassIVE" id="Q9NVK5"/>
<dbReference type="PaxDb" id="9606-ENSP00000229395"/>
<dbReference type="PeptideAtlas" id="Q9NVK5"/>
<dbReference type="ProteomicsDB" id="82818">
    <molecule id="Q9NVK5-1"/>
</dbReference>
<dbReference type="ProteomicsDB" id="82819">
    <molecule id="Q9NVK5-2"/>
</dbReference>
<dbReference type="ProteomicsDB" id="82820">
    <molecule id="Q9NVK5-3"/>
</dbReference>
<dbReference type="Pumba" id="Q9NVK5"/>
<dbReference type="Antibodypedia" id="24359">
    <property type="antibodies" value="214 antibodies from 24 providers"/>
</dbReference>
<dbReference type="DNASU" id="26127"/>
<dbReference type="Ensembl" id="ENST00000229395.8">
    <molecule id="Q9NVK5-1"/>
    <property type="protein sequence ID" value="ENSP00000229395.3"/>
    <property type="gene ID" value="ENSG00000111790.14"/>
</dbReference>
<dbReference type="Ensembl" id="ENST00000327214.5">
    <molecule id="Q9NVK5-2"/>
    <property type="protein sequence ID" value="ENSP00000323763.5"/>
    <property type="gene ID" value="ENSG00000111790.14"/>
</dbReference>
<dbReference type="Ensembl" id="ENST00000546072.5">
    <molecule id="Q9NVK5-3"/>
    <property type="protein sequence ID" value="ENSP00000437556.1"/>
    <property type="gene ID" value="ENSG00000111790.14"/>
</dbReference>
<dbReference type="GeneID" id="26127"/>
<dbReference type="KEGG" id="hsa:26127"/>
<dbReference type="MANE-Select" id="ENST00000229395.8">
    <property type="protein sequence ID" value="ENSP00000229395.3"/>
    <property type="RefSeq nucleotide sequence ID" value="NM_015633.3"/>
    <property type="RefSeq protein sequence ID" value="NP_056448.1"/>
</dbReference>
<dbReference type="UCSC" id="uc001rhl.4">
    <molecule id="Q9NVK5-1"/>
    <property type="organism name" value="human"/>
</dbReference>
<dbReference type="AGR" id="HGNC:23098"/>
<dbReference type="CTD" id="26127"/>
<dbReference type="DisGeNET" id="26127"/>
<dbReference type="GeneCards" id="FGFR1OP2"/>
<dbReference type="HGNC" id="HGNC:23098">
    <property type="gene designation" value="FGFR1OP2"/>
</dbReference>
<dbReference type="HPA" id="ENSG00000111790">
    <property type="expression patterns" value="Low tissue specificity"/>
</dbReference>
<dbReference type="MIM" id="608858">
    <property type="type" value="gene"/>
</dbReference>
<dbReference type="neXtProt" id="NX_Q9NVK5"/>
<dbReference type="OpenTargets" id="ENSG00000111790"/>
<dbReference type="PharmGKB" id="PA134972108"/>
<dbReference type="VEuPathDB" id="HostDB:ENSG00000111790"/>
<dbReference type="eggNOG" id="ENOG502QSAD">
    <property type="taxonomic scope" value="Eukaryota"/>
</dbReference>
<dbReference type="GeneTree" id="ENSGT00390000018003"/>
<dbReference type="HOGENOM" id="CLU_073167_1_0_1"/>
<dbReference type="InParanoid" id="Q9NVK5"/>
<dbReference type="OMA" id="KYRQHTE"/>
<dbReference type="OrthoDB" id="21214at2759"/>
<dbReference type="PAN-GO" id="Q9NVK5">
    <property type="GO annotations" value="1 GO annotation based on evolutionary models"/>
</dbReference>
<dbReference type="PhylomeDB" id="Q9NVK5"/>
<dbReference type="TreeFam" id="TF324337"/>
<dbReference type="PathwayCommons" id="Q9NVK5"/>
<dbReference type="Reactome" id="R-HSA-1839117">
    <property type="pathway name" value="Signaling by cytosolic FGFR1 fusion mutants"/>
</dbReference>
<dbReference type="Reactome" id="R-HSA-5655302">
    <property type="pathway name" value="Signaling by FGFR1 in disease"/>
</dbReference>
<dbReference type="SignaLink" id="Q9NVK5"/>
<dbReference type="BioGRID-ORCS" id="26127">
    <property type="hits" value="86 hits in 1154 CRISPR screens"/>
</dbReference>
<dbReference type="ChiTaRS" id="FGFR1OP2">
    <property type="organism name" value="human"/>
</dbReference>
<dbReference type="GenomeRNAi" id="26127"/>
<dbReference type="Pharos" id="Q9NVK5">
    <property type="development level" value="Tbio"/>
</dbReference>
<dbReference type="PRO" id="PR:Q9NVK5"/>
<dbReference type="Proteomes" id="UP000005640">
    <property type="component" value="Chromosome 12"/>
</dbReference>
<dbReference type="RNAct" id="Q9NVK5">
    <property type="molecule type" value="protein"/>
</dbReference>
<dbReference type="Bgee" id="ENSG00000111790">
    <property type="expression patterns" value="Expressed in calcaneal tendon and 186 other cell types or tissues"/>
</dbReference>
<dbReference type="ExpressionAtlas" id="Q9NVK5">
    <property type="expression patterns" value="baseline and differential"/>
</dbReference>
<dbReference type="GO" id="GO:0005829">
    <property type="term" value="C:cytosol"/>
    <property type="evidence" value="ECO:0000304"/>
    <property type="project" value="Reactome"/>
</dbReference>
<dbReference type="GO" id="GO:0042802">
    <property type="term" value="F:identical protein binding"/>
    <property type="evidence" value="ECO:0007669"/>
    <property type="project" value="Ensembl"/>
</dbReference>
<dbReference type="GO" id="GO:0009611">
    <property type="term" value="P:response to wounding"/>
    <property type="evidence" value="ECO:0000318"/>
    <property type="project" value="GO_Central"/>
</dbReference>
<dbReference type="GO" id="GO:0042060">
    <property type="term" value="P:wound healing"/>
    <property type="evidence" value="ECO:0007669"/>
    <property type="project" value="Ensembl"/>
</dbReference>
<dbReference type="InterPro" id="IPR008555">
    <property type="entry name" value="SIKE"/>
</dbReference>
<dbReference type="PANTHER" id="PTHR12186:SF3">
    <property type="entry name" value="FGFR1 ONCOGENE PARTNER 2"/>
    <property type="match status" value="1"/>
</dbReference>
<dbReference type="PANTHER" id="PTHR12186">
    <property type="entry name" value="SIKE FAMILY MEMBER"/>
    <property type="match status" value="1"/>
</dbReference>
<dbReference type="Pfam" id="PF05769">
    <property type="entry name" value="SIKE"/>
    <property type="match status" value="2"/>
</dbReference>
<evidence type="ECO:0000250" key="1"/>
<evidence type="ECO:0000255" key="2"/>
<evidence type="ECO:0000256" key="3">
    <source>
        <dbReference type="SAM" id="MobiDB-lite"/>
    </source>
</evidence>
<evidence type="ECO:0000303" key="4">
    <source>
    </source>
</evidence>
<evidence type="ECO:0000303" key="5">
    <source>
    </source>
</evidence>
<evidence type="ECO:0000303" key="6">
    <source>
    </source>
</evidence>
<evidence type="ECO:0000303" key="7">
    <source ref="3"/>
</evidence>
<evidence type="ECO:0000305" key="8"/>
<evidence type="ECO:0007744" key="9">
    <source>
    </source>
</evidence>
<proteinExistence type="evidence at protein level"/>
<protein>
    <recommendedName>
        <fullName>FGFR1 oncogene partner 2</fullName>
    </recommendedName>
</protein>
<reference key="1">
    <citation type="journal article" date="2000" name="Genome Res.">
        <title>Cloning and functional analysis of cDNAs with open reading frames for 300 previously undefined genes expressed in CD34+ hematopoietic stem/progenitor cells.</title>
        <authorList>
            <person name="Zhang Q.-H."/>
            <person name="Ye M."/>
            <person name="Wu X.-Y."/>
            <person name="Ren S.-X."/>
            <person name="Zhao M."/>
            <person name="Zhao C.-J."/>
            <person name="Fu G."/>
            <person name="Shen Y."/>
            <person name="Fan H.-Y."/>
            <person name="Lu G."/>
            <person name="Zhong M."/>
            <person name="Xu X.-R."/>
            <person name="Han Z.-G."/>
            <person name="Zhang J.-W."/>
            <person name="Tao J."/>
            <person name="Huang Q.-H."/>
            <person name="Zhou J."/>
            <person name="Hu G.-X."/>
            <person name="Gu J."/>
            <person name="Chen S.-J."/>
            <person name="Chen Z."/>
        </authorList>
    </citation>
    <scope>NUCLEOTIDE SEQUENCE [LARGE SCALE MRNA] (ISOFORM 2)</scope>
    <source>
        <tissue>Blood</tissue>
    </source>
</reference>
<reference key="2">
    <citation type="journal article" date="2004" name="Nat. Genet.">
        <title>Complete sequencing and characterization of 21,243 full-length human cDNAs.</title>
        <authorList>
            <person name="Ota T."/>
            <person name="Suzuki Y."/>
            <person name="Nishikawa T."/>
            <person name="Otsuki T."/>
            <person name="Sugiyama T."/>
            <person name="Irie R."/>
            <person name="Wakamatsu A."/>
            <person name="Hayashi K."/>
            <person name="Sato H."/>
            <person name="Nagai K."/>
            <person name="Kimura K."/>
            <person name="Makita H."/>
            <person name="Sekine M."/>
            <person name="Obayashi M."/>
            <person name="Nishi T."/>
            <person name="Shibahara T."/>
            <person name="Tanaka T."/>
            <person name="Ishii S."/>
            <person name="Yamamoto J."/>
            <person name="Saito K."/>
            <person name="Kawai Y."/>
            <person name="Isono Y."/>
            <person name="Nakamura Y."/>
            <person name="Nagahari K."/>
            <person name="Murakami K."/>
            <person name="Yasuda T."/>
            <person name="Iwayanagi T."/>
            <person name="Wagatsuma M."/>
            <person name="Shiratori A."/>
            <person name="Sudo H."/>
            <person name="Hosoiri T."/>
            <person name="Kaku Y."/>
            <person name="Kodaira H."/>
            <person name="Kondo H."/>
            <person name="Sugawara M."/>
            <person name="Takahashi M."/>
            <person name="Kanda K."/>
            <person name="Yokoi T."/>
            <person name="Furuya T."/>
            <person name="Kikkawa E."/>
            <person name="Omura Y."/>
            <person name="Abe K."/>
            <person name="Kamihara K."/>
            <person name="Katsuta N."/>
            <person name="Sato K."/>
            <person name="Tanikawa M."/>
            <person name="Yamazaki M."/>
            <person name="Ninomiya K."/>
            <person name="Ishibashi T."/>
            <person name="Yamashita H."/>
            <person name="Murakawa K."/>
            <person name="Fujimori K."/>
            <person name="Tanai H."/>
            <person name="Kimata M."/>
            <person name="Watanabe M."/>
            <person name="Hiraoka S."/>
            <person name="Chiba Y."/>
            <person name="Ishida S."/>
            <person name="Ono Y."/>
            <person name="Takiguchi S."/>
            <person name="Watanabe S."/>
            <person name="Yosida M."/>
            <person name="Hotuta T."/>
            <person name="Kusano J."/>
            <person name="Kanehori K."/>
            <person name="Takahashi-Fujii A."/>
            <person name="Hara H."/>
            <person name="Tanase T.-O."/>
            <person name="Nomura Y."/>
            <person name="Togiya S."/>
            <person name="Komai F."/>
            <person name="Hara R."/>
            <person name="Takeuchi K."/>
            <person name="Arita M."/>
            <person name="Imose N."/>
            <person name="Musashino K."/>
            <person name="Yuuki H."/>
            <person name="Oshima A."/>
            <person name="Sasaki N."/>
            <person name="Aotsuka S."/>
            <person name="Yoshikawa Y."/>
            <person name="Matsunawa H."/>
            <person name="Ichihara T."/>
            <person name="Shiohata N."/>
            <person name="Sano S."/>
            <person name="Moriya S."/>
            <person name="Momiyama H."/>
            <person name="Satoh N."/>
            <person name="Takami S."/>
            <person name="Terashima Y."/>
            <person name="Suzuki O."/>
            <person name="Nakagawa S."/>
            <person name="Senoh A."/>
            <person name="Mizoguchi H."/>
            <person name="Goto Y."/>
            <person name="Shimizu F."/>
            <person name="Wakebe H."/>
            <person name="Hishigaki H."/>
            <person name="Watanabe T."/>
            <person name="Sugiyama A."/>
            <person name="Takemoto M."/>
            <person name="Kawakami B."/>
            <person name="Yamazaki M."/>
            <person name="Watanabe K."/>
            <person name="Kumagai A."/>
            <person name="Itakura S."/>
            <person name="Fukuzumi Y."/>
            <person name="Fujimori Y."/>
            <person name="Komiyama M."/>
            <person name="Tashiro H."/>
            <person name="Tanigami A."/>
            <person name="Fujiwara T."/>
            <person name="Ono T."/>
            <person name="Yamada K."/>
            <person name="Fujii Y."/>
            <person name="Ozaki K."/>
            <person name="Hirao M."/>
            <person name="Ohmori Y."/>
            <person name="Kawabata A."/>
            <person name="Hikiji T."/>
            <person name="Kobatake N."/>
            <person name="Inagaki H."/>
            <person name="Ikema Y."/>
            <person name="Okamoto S."/>
            <person name="Okitani R."/>
            <person name="Kawakami T."/>
            <person name="Noguchi S."/>
            <person name="Itoh T."/>
            <person name="Shigeta K."/>
            <person name="Senba T."/>
            <person name="Matsumura K."/>
            <person name="Nakajima Y."/>
            <person name="Mizuno T."/>
            <person name="Morinaga M."/>
            <person name="Sasaki M."/>
            <person name="Togashi T."/>
            <person name="Oyama M."/>
            <person name="Hata H."/>
            <person name="Watanabe M."/>
            <person name="Komatsu T."/>
            <person name="Mizushima-Sugano J."/>
            <person name="Satoh T."/>
            <person name="Shirai Y."/>
            <person name="Takahashi Y."/>
            <person name="Nakagawa K."/>
            <person name="Okumura K."/>
            <person name="Nagase T."/>
            <person name="Nomura N."/>
            <person name="Kikuchi H."/>
            <person name="Masuho Y."/>
            <person name="Yamashita R."/>
            <person name="Nakai K."/>
            <person name="Yada T."/>
            <person name="Nakamura Y."/>
            <person name="Ohara O."/>
            <person name="Isogai T."/>
            <person name="Sugano S."/>
        </authorList>
    </citation>
    <scope>NUCLEOTIDE SEQUENCE [LARGE SCALE MRNA] (ISOFORM 1)</scope>
</reference>
<reference key="3">
    <citation type="submission" date="2003-12" db="EMBL/GenBank/DDBJ databases">
        <authorList>
            <person name="Lin L."/>
            <person name="Zhong G."/>
            <person name="Ke R."/>
            <person name="Li H."/>
            <person name="Zhou G."/>
            <person name="Shen C."/>
            <person name="Yang S."/>
        </authorList>
    </citation>
    <scope>NUCLEOTIDE SEQUENCE [LARGE SCALE MRNA] (ISOFORM 2)</scope>
</reference>
<reference key="4">
    <citation type="journal article" date="2004" name="Genome Res.">
        <title>The status, quality, and expansion of the NIH full-length cDNA project: the Mammalian Gene Collection (MGC).</title>
        <authorList>
            <consortium name="The MGC Project Team"/>
        </authorList>
    </citation>
    <scope>NUCLEOTIDE SEQUENCE [LARGE SCALE MRNA] (ISOFORM 3)</scope>
    <source>
        <tissue>Uterus</tissue>
    </source>
</reference>
<reference key="5">
    <citation type="journal article" date="2007" name="BMC Genomics">
        <title>The full-ORF clone resource of the German cDNA consortium.</title>
        <authorList>
            <person name="Bechtel S."/>
            <person name="Rosenfelder H."/>
            <person name="Duda A."/>
            <person name="Schmidt C.P."/>
            <person name="Ernst U."/>
            <person name="Wellenreuther R."/>
            <person name="Mehrle A."/>
            <person name="Schuster C."/>
            <person name="Bahr A."/>
            <person name="Bloecker H."/>
            <person name="Heubner D."/>
            <person name="Hoerlein A."/>
            <person name="Michel G."/>
            <person name="Wedler H."/>
            <person name="Koehrer K."/>
            <person name="Ottenwaelder B."/>
            <person name="Poustka A."/>
            <person name="Wiemann S."/>
            <person name="Schupp I."/>
        </authorList>
    </citation>
    <scope>NUCLEOTIDE SEQUENCE [LARGE SCALE MRNA] OF 47-253 (ISOFORM 2)</scope>
    <source>
        <tissue>Brain</tissue>
    </source>
</reference>
<reference key="6">
    <citation type="journal article" date="2004" name="Genes Chromosomes Cancer">
        <title>Identification of a novel gene, FGFR1OP2, fused to FGFR1 in 8p11 myeloproliferative syndrome.</title>
        <authorList>
            <person name="Grand E.K."/>
            <person name="Grand F.H."/>
            <person name="Chase A.J."/>
            <person name="Ross F.M."/>
            <person name="Corcoran M.M."/>
            <person name="Oscier D.G."/>
            <person name="Cross N.C.P."/>
        </authorList>
    </citation>
    <scope>CHROMOSOMAL TRANSLOCATION WITH FGFR1</scope>
</reference>
<reference key="7">
    <citation type="journal article" date="2006" name="Blood">
        <title>Phosphotyrosine profiling identifies the KG-1 cell line as a model for the study of FGFR1 fusions in acute myeloid leukemia.</title>
        <authorList>
            <person name="Gu T.-L."/>
            <person name="Goss V.L."/>
            <person name="Reeves C."/>
            <person name="Popova L."/>
            <person name="Nardone J."/>
            <person name="Macneill J."/>
            <person name="Walters D.K."/>
            <person name="Wang Y."/>
            <person name="Rush J."/>
            <person name="Comb M.J."/>
            <person name="Druker B.J."/>
            <person name="Polakiewicz R.D."/>
        </authorList>
    </citation>
    <scope>CHROMOSOMAL TRANSLOCATION WITH FGFR1</scope>
</reference>
<reference key="8">
    <citation type="journal article" date="2007" name="Blood">
        <title>14-3-3 integrates pro-survival signals mediated by the AKT and MAPK pathways in ZNF198-FGFR1 transformed hematopoietic cells.</title>
        <authorList>
            <person name="Dong S."/>
            <person name="Kang S."/>
            <person name="Gu T."/>
            <person name="Kardar S."/>
            <person name="Fu H."/>
            <person name="Lonial S."/>
            <person name="Khoury H.J."/>
            <person name="Khuri F."/>
            <person name="Chen J."/>
        </authorList>
    </citation>
    <scope>CHROMOSOMAL TRANSLOCATION WITH FGFR1</scope>
</reference>
<reference key="9">
    <citation type="journal article" date="2013" name="J. Proteome Res.">
        <title>Toward a comprehensive characterization of a human cancer cell phosphoproteome.</title>
        <authorList>
            <person name="Zhou H."/>
            <person name="Di Palma S."/>
            <person name="Preisinger C."/>
            <person name="Peng M."/>
            <person name="Polat A.N."/>
            <person name="Heck A.J."/>
            <person name="Mohammed S."/>
        </authorList>
    </citation>
    <scope>PHOSPHORYLATION [LARGE SCALE ANALYSIS] AT SER-141</scope>
    <scope>IDENTIFICATION BY MASS SPECTROMETRY [LARGE SCALE ANALYSIS]</scope>
    <source>
        <tissue>Erythroleukemia</tissue>
    </source>
</reference>
<reference key="10">
    <citation type="journal article" date="2014" name="J. Proteomics">
        <title>An enzyme assisted RP-RPLC approach for in-depth analysis of human liver phosphoproteome.</title>
        <authorList>
            <person name="Bian Y."/>
            <person name="Song C."/>
            <person name="Cheng K."/>
            <person name="Dong M."/>
            <person name="Wang F."/>
            <person name="Huang J."/>
            <person name="Sun D."/>
            <person name="Wang L."/>
            <person name="Ye M."/>
            <person name="Zou H."/>
        </authorList>
    </citation>
    <scope>IDENTIFICATION BY MASS SPECTROMETRY [LARGE SCALE ANALYSIS]</scope>
    <source>
        <tissue>Liver</tissue>
    </source>
</reference>
<name>FGOP2_HUMAN</name>